<comment type="function">
    <text evidence="1">Catalyzes the NADPH-dependent reduction of N-acetyl-5-glutamyl phosphate to yield N-acetyl-L-glutamate 5-semialdehyde.</text>
</comment>
<comment type="catalytic activity">
    <reaction evidence="1">
        <text>N-acetyl-L-glutamate 5-semialdehyde + phosphate + NADP(+) = N-acetyl-L-glutamyl 5-phosphate + NADPH + H(+)</text>
        <dbReference type="Rhea" id="RHEA:21588"/>
        <dbReference type="ChEBI" id="CHEBI:15378"/>
        <dbReference type="ChEBI" id="CHEBI:29123"/>
        <dbReference type="ChEBI" id="CHEBI:43474"/>
        <dbReference type="ChEBI" id="CHEBI:57783"/>
        <dbReference type="ChEBI" id="CHEBI:57936"/>
        <dbReference type="ChEBI" id="CHEBI:58349"/>
        <dbReference type="EC" id="1.2.1.38"/>
    </reaction>
</comment>
<comment type="pathway">
    <text evidence="1">Amino-acid biosynthesis; L-arginine biosynthesis; N(2)-acetyl-L-ornithine from L-glutamate: step 3/4.</text>
</comment>
<comment type="subcellular location">
    <subcellularLocation>
        <location evidence="1">Cytoplasm</location>
    </subcellularLocation>
</comment>
<comment type="similarity">
    <text evidence="1">Belongs to the NAGSA dehydrogenase family. Type 2 subfamily.</text>
</comment>
<sequence length="311" mass="33671">MKPKIFIDGEHGTTGLQIRTRLAERDDLEVISIPEAERRNKDLRADYLRAADIAILCLPDDASKEAVSLLEGHNSTRIIDTSTAHRVHPDWAYGFAELAKGQRERIAEARLVANPGCYPTGAIALVRPLRDAGLLPADYPVSVNAVSGYTGGGKQMIAQMEDKSHPEHLAANNFLYGLPLKHKHVPELQLHGRLDRRPIFSPSVGRFPQGMIVQVPLFLTGLEGTPSLAKVHSVLTDHYAGQDIVEVAPLEESAKLARVDAEELAGKDGMKLFVFGTEGDGEVNLVALLDNLGKGASGAAVQNMNLMLGKV</sequence>
<evidence type="ECO:0000255" key="1">
    <source>
        <dbReference type="HAMAP-Rule" id="MF_01110"/>
    </source>
</evidence>
<reference key="1">
    <citation type="journal article" date="2011" name="J. Bacteriol.">
        <title>Genome of Ochrobactrum anthropi ATCC 49188 T, a versatile opportunistic pathogen and symbiont of several eukaryotic hosts.</title>
        <authorList>
            <person name="Chain P.S."/>
            <person name="Lang D.M."/>
            <person name="Comerci D.J."/>
            <person name="Malfatti S.A."/>
            <person name="Vergez L.M."/>
            <person name="Shin M."/>
            <person name="Ugalde R.A."/>
            <person name="Garcia E."/>
            <person name="Tolmasky M.E."/>
        </authorList>
    </citation>
    <scope>NUCLEOTIDE SEQUENCE [LARGE SCALE GENOMIC DNA]</scope>
    <source>
        <strain>ATCC 49188 / DSM 6882 / CCUG 24695 / JCM 21032 / LMG 3331 / NBRC 15819 / NCTC 12168 / Alc 37</strain>
    </source>
</reference>
<dbReference type="EC" id="1.2.1.38" evidence="1"/>
<dbReference type="EMBL" id="CP000758">
    <property type="protein sequence ID" value="ABS15213.1"/>
    <property type="molecule type" value="Genomic_DNA"/>
</dbReference>
<dbReference type="RefSeq" id="WP_012092323.1">
    <property type="nucleotide sequence ID" value="NC_009667.1"/>
</dbReference>
<dbReference type="SMR" id="A6X1V9"/>
<dbReference type="STRING" id="439375.Oant_2500"/>
<dbReference type="KEGG" id="oan:Oant_2500"/>
<dbReference type="PATRIC" id="fig|439375.7.peg.2633"/>
<dbReference type="eggNOG" id="COG0002">
    <property type="taxonomic scope" value="Bacteria"/>
</dbReference>
<dbReference type="HOGENOM" id="CLU_077118_0_0_5"/>
<dbReference type="PhylomeDB" id="A6X1V9"/>
<dbReference type="UniPathway" id="UPA00068">
    <property type="reaction ID" value="UER00108"/>
</dbReference>
<dbReference type="Proteomes" id="UP000002301">
    <property type="component" value="Chromosome 1"/>
</dbReference>
<dbReference type="GO" id="GO:0005737">
    <property type="term" value="C:cytoplasm"/>
    <property type="evidence" value="ECO:0007669"/>
    <property type="project" value="UniProtKB-SubCell"/>
</dbReference>
<dbReference type="GO" id="GO:0003942">
    <property type="term" value="F:N-acetyl-gamma-glutamyl-phosphate reductase activity"/>
    <property type="evidence" value="ECO:0007669"/>
    <property type="project" value="UniProtKB-UniRule"/>
</dbReference>
<dbReference type="GO" id="GO:0051287">
    <property type="term" value="F:NAD binding"/>
    <property type="evidence" value="ECO:0007669"/>
    <property type="project" value="InterPro"/>
</dbReference>
<dbReference type="GO" id="GO:0006526">
    <property type="term" value="P:L-arginine biosynthetic process"/>
    <property type="evidence" value="ECO:0007669"/>
    <property type="project" value="UniProtKB-UniRule"/>
</dbReference>
<dbReference type="CDD" id="cd23935">
    <property type="entry name" value="AGPR_2_C"/>
    <property type="match status" value="1"/>
</dbReference>
<dbReference type="CDD" id="cd17896">
    <property type="entry name" value="AGPR_2_N"/>
    <property type="match status" value="1"/>
</dbReference>
<dbReference type="Gene3D" id="3.30.360.10">
    <property type="entry name" value="Dihydrodipicolinate Reductase, domain 2"/>
    <property type="match status" value="1"/>
</dbReference>
<dbReference type="Gene3D" id="3.40.50.720">
    <property type="entry name" value="NAD(P)-binding Rossmann-like Domain"/>
    <property type="match status" value="1"/>
</dbReference>
<dbReference type="HAMAP" id="MF_01110">
    <property type="entry name" value="ArgC_type2"/>
    <property type="match status" value="1"/>
</dbReference>
<dbReference type="InterPro" id="IPR023013">
    <property type="entry name" value="AGPR_AS"/>
</dbReference>
<dbReference type="InterPro" id="IPR010136">
    <property type="entry name" value="AGPR_type-2"/>
</dbReference>
<dbReference type="InterPro" id="IPR036291">
    <property type="entry name" value="NAD(P)-bd_dom_sf"/>
</dbReference>
<dbReference type="InterPro" id="IPR050085">
    <property type="entry name" value="NAGSA_dehydrogenase"/>
</dbReference>
<dbReference type="InterPro" id="IPR000534">
    <property type="entry name" value="Semialdehyde_DH_NAD-bd"/>
</dbReference>
<dbReference type="NCBIfam" id="TIGR01851">
    <property type="entry name" value="argC_other"/>
    <property type="match status" value="1"/>
</dbReference>
<dbReference type="PANTHER" id="PTHR32338:SF10">
    <property type="entry name" value="N-ACETYL-GAMMA-GLUTAMYL-PHOSPHATE REDUCTASE, CHLOROPLASTIC-RELATED"/>
    <property type="match status" value="1"/>
</dbReference>
<dbReference type="PANTHER" id="PTHR32338">
    <property type="entry name" value="N-ACETYL-GAMMA-GLUTAMYL-PHOSPHATE REDUCTASE, CHLOROPLASTIC-RELATED-RELATED"/>
    <property type="match status" value="1"/>
</dbReference>
<dbReference type="Pfam" id="PF01118">
    <property type="entry name" value="Semialdhyde_dh"/>
    <property type="match status" value="1"/>
</dbReference>
<dbReference type="Pfam" id="PF22698">
    <property type="entry name" value="Semialdhyde_dhC_1"/>
    <property type="match status" value="1"/>
</dbReference>
<dbReference type="SMART" id="SM00859">
    <property type="entry name" value="Semialdhyde_dh"/>
    <property type="match status" value="1"/>
</dbReference>
<dbReference type="SUPFAM" id="SSF55347">
    <property type="entry name" value="Glyceraldehyde-3-phosphate dehydrogenase-like, C-terminal domain"/>
    <property type="match status" value="1"/>
</dbReference>
<dbReference type="SUPFAM" id="SSF51735">
    <property type="entry name" value="NAD(P)-binding Rossmann-fold domains"/>
    <property type="match status" value="1"/>
</dbReference>
<dbReference type="PROSITE" id="PS01224">
    <property type="entry name" value="ARGC"/>
    <property type="match status" value="1"/>
</dbReference>
<proteinExistence type="inferred from homology"/>
<gene>
    <name evidence="1" type="primary">argC</name>
    <name type="ordered locus">Oant_2500</name>
</gene>
<feature type="chain" id="PRO_1000065143" description="N-acetyl-gamma-glutamyl-phosphate reductase">
    <location>
        <begin position="1"/>
        <end position="311"/>
    </location>
</feature>
<feature type="active site" evidence="1">
    <location>
        <position position="117"/>
    </location>
</feature>
<organism>
    <name type="scientific">Brucella anthropi (strain ATCC 49188 / DSM 6882 / CCUG 24695 / JCM 21032 / LMG 3331 / NBRC 15819 / NCTC 12168 / Alc 37)</name>
    <name type="common">Ochrobactrum anthropi</name>
    <dbReference type="NCBI Taxonomy" id="439375"/>
    <lineage>
        <taxon>Bacteria</taxon>
        <taxon>Pseudomonadati</taxon>
        <taxon>Pseudomonadota</taxon>
        <taxon>Alphaproteobacteria</taxon>
        <taxon>Hyphomicrobiales</taxon>
        <taxon>Brucellaceae</taxon>
        <taxon>Brucella/Ochrobactrum group</taxon>
        <taxon>Brucella</taxon>
    </lineage>
</organism>
<keyword id="KW-0028">Amino-acid biosynthesis</keyword>
<keyword id="KW-0055">Arginine biosynthesis</keyword>
<keyword id="KW-0963">Cytoplasm</keyword>
<keyword id="KW-0521">NADP</keyword>
<keyword id="KW-0560">Oxidoreductase</keyword>
<keyword id="KW-1185">Reference proteome</keyword>
<protein>
    <recommendedName>
        <fullName evidence="1">N-acetyl-gamma-glutamyl-phosphate reductase</fullName>
        <shortName evidence="1">AGPR</shortName>
        <ecNumber evidence="1">1.2.1.38</ecNumber>
    </recommendedName>
    <alternativeName>
        <fullName evidence="1">N-acetyl-glutamate semialdehyde dehydrogenase</fullName>
        <shortName evidence="1">NAGSA dehydrogenase</shortName>
    </alternativeName>
</protein>
<name>ARGC_BRUA4</name>
<accession>A6X1V9</accession>